<feature type="chain" id="PRO_1000138206" description="Regulator of sigma D">
    <location>
        <begin position="1"/>
        <end position="169"/>
    </location>
</feature>
<keyword id="KW-0963">Cytoplasm</keyword>
<keyword id="KW-0804">Transcription</keyword>
<keyword id="KW-0805">Transcription regulation</keyword>
<protein>
    <recommendedName>
        <fullName evidence="1">Regulator of sigma D</fullName>
    </recommendedName>
</protein>
<proteinExistence type="inferred from homology"/>
<organism>
    <name type="scientific">Yersinia pseudotuberculosis serotype IB (strain PB1/+)</name>
    <dbReference type="NCBI Taxonomy" id="502801"/>
    <lineage>
        <taxon>Bacteria</taxon>
        <taxon>Pseudomonadati</taxon>
        <taxon>Pseudomonadota</taxon>
        <taxon>Gammaproteobacteria</taxon>
        <taxon>Enterobacterales</taxon>
        <taxon>Yersiniaceae</taxon>
        <taxon>Yersinia</taxon>
    </lineage>
</organism>
<comment type="function">
    <text evidence="1">Binds RpoD and negatively regulates RpoD-mediated transcription activation by preventing the interaction between the primary sigma factor RpoD with the catalytic core of the RNA polymerase and with promoter DNA. May be involved in replacement of the RNA polymerase sigma subunit from RpoD to RpoS during the transition from exponential growth to the stationary phase.</text>
</comment>
<comment type="subunit">
    <text evidence="1">Interacts with RpoD.</text>
</comment>
<comment type="subcellular location">
    <subcellularLocation>
        <location evidence="1">Cytoplasm</location>
    </subcellularLocation>
</comment>
<comment type="similarity">
    <text evidence="1">Belongs to the Rsd/AlgQ family.</text>
</comment>
<sequence>MLNRLESLTQRVGGSNELIDQWLHARKELLVSYCTVIGIKPQKEKHTPLNAKTLENFCHNLVDYLSSGHFHIYDRIIKEVEGASSPKMALTAKIHPALKNNTQTIMAFHDRYTNIEIDDDSCTEYQQALSDIGEALDARFKLEDQLIQWAAESWQAAQLADADKKSQVN</sequence>
<gene>
    <name evidence="1" type="primary">rsd</name>
    <name type="ordered locus">YPTS_0312</name>
</gene>
<dbReference type="EMBL" id="CP001048">
    <property type="protein sequence ID" value="ACC87303.1"/>
    <property type="molecule type" value="Genomic_DNA"/>
</dbReference>
<dbReference type="RefSeq" id="WP_011191553.1">
    <property type="nucleotide sequence ID" value="NZ_CP009780.1"/>
</dbReference>
<dbReference type="SMR" id="B2K121"/>
<dbReference type="GeneID" id="49787717"/>
<dbReference type="KEGG" id="ypb:YPTS_0312"/>
<dbReference type="PATRIC" id="fig|502801.10.peg.3988"/>
<dbReference type="GO" id="GO:0005737">
    <property type="term" value="C:cytoplasm"/>
    <property type="evidence" value="ECO:0007669"/>
    <property type="project" value="UniProtKB-SubCell"/>
</dbReference>
<dbReference type="GO" id="GO:0006355">
    <property type="term" value="P:regulation of DNA-templated transcription"/>
    <property type="evidence" value="ECO:0007669"/>
    <property type="project" value="InterPro"/>
</dbReference>
<dbReference type="Gene3D" id="1.20.120.1370">
    <property type="entry name" value="Regulator of RNA polymerase sigma(70) subunit, domain 4"/>
    <property type="match status" value="1"/>
</dbReference>
<dbReference type="HAMAP" id="MF_01181">
    <property type="entry name" value="Rsd"/>
    <property type="match status" value="1"/>
</dbReference>
<dbReference type="InterPro" id="IPR038309">
    <property type="entry name" value="Rsd/AlgQ_sf"/>
</dbReference>
<dbReference type="InterPro" id="IPR023785">
    <property type="entry name" value="Sigma70_reg_Rsd"/>
</dbReference>
<dbReference type="InterPro" id="IPR007448">
    <property type="entry name" value="Sigma70_reg_Rsd_AlgQ"/>
</dbReference>
<dbReference type="NCBIfam" id="NF008723">
    <property type="entry name" value="PRK11718.1"/>
    <property type="match status" value="1"/>
</dbReference>
<dbReference type="Pfam" id="PF04353">
    <property type="entry name" value="Rsd_AlgQ"/>
    <property type="match status" value="1"/>
</dbReference>
<dbReference type="PIRSF" id="PIRSF016548">
    <property type="entry name" value="Rsd_AlgQ"/>
    <property type="match status" value="1"/>
</dbReference>
<reference key="1">
    <citation type="submission" date="2008-04" db="EMBL/GenBank/DDBJ databases">
        <title>Complete sequence of Yersinia pseudotuberculosis PB1/+.</title>
        <authorList>
            <person name="Copeland A."/>
            <person name="Lucas S."/>
            <person name="Lapidus A."/>
            <person name="Glavina del Rio T."/>
            <person name="Dalin E."/>
            <person name="Tice H."/>
            <person name="Bruce D."/>
            <person name="Goodwin L."/>
            <person name="Pitluck S."/>
            <person name="Munk A.C."/>
            <person name="Brettin T."/>
            <person name="Detter J.C."/>
            <person name="Han C."/>
            <person name="Tapia R."/>
            <person name="Schmutz J."/>
            <person name="Larimer F."/>
            <person name="Land M."/>
            <person name="Hauser L."/>
            <person name="Challacombe J.F."/>
            <person name="Green L."/>
            <person name="Lindler L.E."/>
            <person name="Nikolich M.P."/>
            <person name="Richardson P."/>
        </authorList>
    </citation>
    <scope>NUCLEOTIDE SEQUENCE [LARGE SCALE GENOMIC DNA]</scope>
    <source>
        <strain>PB1/+</strain>
    </source>
</reference>
<accession>B2K121</accession>
<evidence type="ECO:0000255" key="1">
    <source>
        <dbReference type="HAMAP-Rule" id="MF_01181"/>
    </source>
</evidence>
<name>RSD_YERPB</name>